<comment type="function">
    <text>May interact with several cellular chemokines to interfere with chemokine-glycosaminoglycan (GAG) interactions at the cell surface to alter chemotaxis of nearby responsive cells.</text>
</comment>
<comment type="subcellular location">
    <subcellularLocation>
        <location evidence="2">Secreted</location>
    </subcellularLocation>
</comment>
<comment type="induction">
    <text>Expressed in the early phase of the viral replicative cycle.</text>
</comment>
<comment type="similarity">
    <text evidence="3">Belongs to the orthopoxvirus OPG170 family.</text>
</comment>
<gene>
    <name type="primary">OPG170</name>
    <name type="ordered locus">VACWR166</name>
    <name type="ORF">A41L</name>
</gene>
<organismHost>
    <name type="scientific">Bos taurus</name>
    <name type="common">Bovine</name>
    <dbReference type="NCBI Taxonomy" id="9913"/>
</organismHost>
<sequence length="219" mass="25093">MYSLVFVILMCIPFSFQTVYDDKSVCDSDNKEYMGIEVYVEATLDEPLRQTTCESKIHKYGASVSNGGLNISVDLLNCFLNFHTVGVYTNRDTVYAKFASLDPWTTEPINSMTHDDLVKLTEECIVDIYLKCEVDKTKDFMKTNGNRLKPRDFKTVPPSNVGSMIELQSDYCVNDVTTYVKIYDECGNIKQHSIPTLRDYFTTKNGQPRKILKKKFDNC</sequence>
<reference key="1">
    <citation type="journal article" date="1991" name="Virology">
        <title>Vaccinia virus homologues of the Shope fibroma virus inverted terminal repeat proteins and a discontinuous ORF related to the tumor necrosis factor receptor family.</title>
        <authorList>
            <person name="Howard S.T."/>
            <person name="Chan Y.S."/>
            <person name="Smith G.L."/>
        </authorList>
    </citation>
    <scope>NUCLEOTIDE SEQUENCE [GENOMIC DNA]</scope>
</reference>
<reference key="2">
    <citation type="journal article" date="1991" name="J. Gen. Virol.">
        <title>Nucleotide sequence of 42 kbp of vaccinia virus strain WR from near the right inverted terminal repeat.</title>
        <authorList>
            <person name="Smith G.L."/>
            <person name="Chan Y.S."/>
            <person name="Howard S.T."/>
        </authorList>
    </citation>
    <scope>NUCLEOTIDE SEQUENCE [GENOMIC DNA]</scope>
</reference>
<reference key="3">
    <citation type="journal article" date="1991" name="J. Virol.">
        <title>Sequence analysis, expression, and deletion of a vaccinia virus gene encoding a homolog of profilin, a eukaryotic actin-binding protein.</title>
        <authorList>
            <person name="Blasco R."/>
            <person name="Cole N.B."/>
            <person name="Moss B."/>
        </authorList>
    </citation>
    <scope>NUCLEOTIDE SEQUENCE [GENOMIC DNA] OF 1-102</scope>
</reference>
<reference key="4">
    <citation type="submission" date="2003-02" db="EMBL/GenBank/DDBJ databases">
        <title>Sequencing of the coding region of Vaccinia-WR to an average 9-fold redundancy and an error rate of 0.16/10kb.</title>
        <authorList>
            <person name="Esposito J.J."/>
            <person name="Frace A.M."/>
            <person name="Sammons S.A."/>
            <person name="Olsen-Rasmussen M."/>
            <person name="Osborne J."/>
            <person name="Wohlhueter R."/>
        </authorList>
    </citation>
    <scope>NUCLEOTIDE SEQUENCE [LARGE SCALE GENOMIC DNA]</scope>
</reference>
<reference key="5">
    <citation type="journal article" date="2001" name="J. Gen. Virol.">
        <title>The vaccinia virus A41L protein is a soluble 30 kDa glycoprotein that affects virus virulence.</title>
        <authorList>
            <person name="Ng A."/>
            <person name="Tscharke D.C."/>
            <person name="Reading P.C."/>
            <person name="Smith G.L."/>
        </authorList>
    </citation>
    <scope>SUBCELLULAR LOCATION</scope>
</reference>
<reference key="6">
    <citation type="journal article" date="2008" name="PLoS Pathog.">
        <title>Structure and function of A41, a vaccinia virus chemokine binding protein.</title>
        <authorList>
            <person name="Bahar M.W."/>
            <person name="Kenyon J.C."/>
            <person name="Putz M.M."/>
            <person name="Abrescia N.G."/>
            <person name="Pease J.E."/>
            <person name="Wise E.L."/>
            <person name="Stuart D.I."/>
            <person name="Smith G.L."/>
            <person name="Grimes J.M."/>
        </authorList>
    </citation>
    <scope>X-RAY CRYSTALLOGRAPHY (1.9 ANGSTROMS) OF 21-219</scope>
</reference>
<keyword id="KW-0002">3D-structure</keyword>
<keyword id="KW-0244">Early protein</keyword>
<keyword id="KW-0325">Glycoprotein</keyword>
<keyword id="KW-0945">Host-virus interaction</keyword>
<keyword id="KW-1086">Inhibition of host chemokines by virus</keyword>
<keyword id="KW-1185">Reference proteome</keyword>
<keyword id="KW-0964">Secreted</keyword>
<keyword id="KW-0732">Signal</keyword>
<keyword id="KW-0899">Viral immunoevasion</keyword>
<accession>P24766</accession>
<accession>Q76ZN6</accession>
<feature type="signal peptide" evidence="1">
    <location>
        <begin position="1"/>
        <end position="16"/>
    </location>
</feature>
<feature type="chain" id="PRO_0000040603" description="Protein OPG170">
    <location>
        <begin position="17"/>
        <end position="219"/>
    </location>
</feature>
<feature type="glycosylation site" description="N-linked (GlcNAc...) asparagine; by host" evidence="1">
    <location>
        <position position="70"/>
    </location>
</feature>
<feature type="strand" evidence="4">
    <location>
        <begin position="29"/>
        <end position="46"/>
    </location>
</feature>
<feature type="strand" evidence="4">
    <location>
        <begin position="54"/>
        <end position="58"/>
    </location>
</feature>
<feature type="strand" evidence="4">
    <location>
        <begin position="61"/>
        <end position="66"/>
    </location>
</feature>
<feature type="strand" evidence="4">
    <location>
        <begin position="69"/>
        <end position="77"/>
    </location>
</feature>
<feature type="strand" evidence="4">
    <location>
        <begin position="84"/>
        <end position="90"/>
    </location>
</feature>
<feature type="strand" evidence="4">
    <location>
        <begin position="93"/>
        <end position="99"/>
    </location>
</feature>
<feature type="turn" evidence="4">
    <location>
        <begin position="103"/>
        <end position="105"/>
    </location>
</feature>
<feature type="strand" evidence="4">
    <location>
        <begin position="106"/>
        <end position="108"/>
    </location>
</feature>
<feature type="strand" evidence="4">
    <location>
        <begin position="111"/>
        <end position="113"/>
    </location>
</feature>
<feature type="helix" evidence="4">
    <location>
        <begin position="114"/>
        <end position="123"/>
    </location>
</feature>
<feature type="strand" evidence="4">
    <location>
        <begin position="125"/>
        <end position="132"/>
    </location>
</feature>
<feature type="helix" evidence="4">
    <location>
        <begin position="150"/>
        <end position="152"/>
    </location>
</feature>
<feature type="strand" evidence="4">
    <location>
        <begin position="153"/>
        <end position="155"/>
    </location>
</feature>
<feature type="strand" evidence="4">
    <location>
        <begin position="165"/>
        <end position="168"/>
    </location>
</feature>
<feature type="strand" evidence="4">
    <location>
        <begin position="173"/>
        <end position="192"/>
    </location>
</feature>
<feature type="strand" evidence="4">
    <location>
        <begin position="197"/>
        <end position="203"/>
    </location>
</feature>
<feature type="strand" evidence="4">
    <location>
        <begin position="210"/>
        <end position="212"/>
    </location>
</feature>
<name>PG170_VACCW</name>
<evidence type="ECO:0000255" key="1"/>
<evidence type="ECO:0000269" key="2">
    <source>
    </source>
</evidence>
<evidence type="ECO:0000305" key="3"/>
<evidence type="ECO:0007829" key="4">
    <source>
        <dbReference type="PDB" id="2VGA"/>
    </source>
</evidence>
<proteinExistence type="evidence at protein level"/>
<organism>
    <name type="scientific">Vaccinia virus (strain Western Reserve)</name>
    <name type="common">VACV</name>
    <name type="synonym">Vaccinia virus (strain WR)</name>
    <dbReference type="NCBI Taxonomy" id="10254"/>
    <lineage>
        <taxon>Viruses</taxon>
        <taxon>Varidnaviria</taxon>
        <taxon>Bamfordvirae</taxon>
        <taxon>Nucleocytoviricota</taxon>
        <taxon>Pokkesviricetes</taxon>
        <taxon>Chitovirales</taxon>
        <taxon>Poxviridae</taxon>
        <taxon>Chordopoxvirinae</taxon>
        <taxon>Orthopoxvirus</taxon>
        <taxon>Vaccinia virus</taxon>
    </lineage>
</organism>
<dbReference type="EMBL" id="M58052">
    <property type="protein sequence ID" value="AAA48341.1"/>
    <property type="molecule type" value="Genomic_DNA"/>
</dbReference>
<dbReference type="EMBL" id="D11079">
    <property type="protein sequence ID" value="BAA01814.1"/>
    <property type="molecule type" value="Genomic_DNA"/>
</dbReference>
<dbReference type="EMBL" id="M72474">
    <property type="protein sequence ID" value="AAA48307.1"/>
    <property type="molecule type" value="Genomic_DNA"/>
</dbReference>
<dbReference type="EMBL" id="AY243312">
    <property type="protein sequence ID" value="AAO89445.1"/>
    <property type="molecule type" value="Genomic_DNA"/>
</dbReference>
<dbReference type="PIR" id="JQ1778">
    <property type="entry name" value="JQ1778"/>
</dbReference>
<dbReference type="RefSeq" id="YP_233048.1">
    <property type="nucleotide sequence ID" value="NC_006998.1"/>
</dbReference>
<dbReference type="PDB" id="2VGA">
    <property type="method" value="X-ray"/>
    <property type="resolution" value="1.90 A"/>
    <property type="chains" value="A=21-219"/>
</dbReference>
<dbReference type="PDBsum" id="2VGA"/>
<dbReference type="SMR" id="P24766"/>
<dbReference type="IntAct" id="P24766">
    <property type="interactions" value="10"/>
</dbReference>
<dbReference type="MINT" id="P24766"/>
<dbReference type="DNASU" id="3707696"/>
<dbReference type="GeneID" id="3707696"/>
<dbReference type="KEGG" id="vg:3707696"/>
<dbReference type="EvolutionaryTrace" id="P24766"/>
<dbReference type="Proteomes" id="UP000000344">
    <property type="component" value="Genome"/>
</dbReference>
<dbReference type="GO" id="GO:0005576">
    <property type="term" value="C:extracellular region"/>
    <property type="evidence" value="ECO:0007669"/>
    <property type="project" value="UniProtKB-SubCell"/>
</dbReference>
<dbReference type="Gene3D" id="2.60.240.10">
    <property type="entry name" value="Major secreted virus protein"/>
    <property type="match status" value="1"/>
</dbReference>
<dbReference type="InterPro" id="IPR003184">
    <property type="entry name" value="Orthopox_35kDa"/>
</dbReference>
<dbReference type="InterPro" id="IPR036540">
    <property type="entry name" value="Pox_vCCI-like_sf"/>
</dbReference>
<dbReference type="Pfam" id="PF02250">
    <property type="entry name" value="Orthopox_35kD"/>
    <property type="match status" value="1"/>
</dbReference>
<dbReference type="SUPFAM" id="SSF49889">
    <property type="entry name" value="Soluble secreted chemokine inhibitor, VCCI"/>
    <property type="match status" value="1"/>
</dbReference>
<protein>
    <recommendedName>
        <fullName>Protein OPG170</fullName>
    </recommendedName>
</protein>